<sequence length="359" mass="38716">MTRLTLALDVMGGDFGPSVTVPAALQALNANSQLTLLLVGNPDIITPLLAKADFEQRSRLQIIPAQSVIASDARPSQAIRASRGTSMRVALELVKEGRAEACVSAGNTGALMGLAKLLLKPLEGIERPALVTVLPHQQKGKTVVLDLGANVDCDSTMLVQFAVMGAVLAEEVVGIKNPRVALLNIGEEETKGLDSIREASLMLKTVPTINYIGYLEANELLTGKTDVLVCDGFTGNVTLKTMEGVVRMFLSLLKSQGEGKKRSWWLLLLKRWLQKSLTRRFSHLNPDQYNGACLLGLRGTVIKSHGAANQRAFAVAIEQAVQAVQRQVPQRIAARLESVYPAGFEPLDDGKGVNLRAHR</sequence>
<dbReference type="EC" id="2.3.1.274" evidence="1"/>
<dbReference type="EMBL" id="CP001138">
    <property type="protein sequence ID" value="ACH52516.1"/>
    <property type="molecule type" value="Genomic_DNA"/>
</dbReference>
<dbReference type="RefSeq" id="WP_001518286.1">
    <property type="nucleotide sequence ID" value="NC_011149.1"/>
</dbReference>
<dbReference type="SMR" id="B5F915"/>
<dbReference type="KEGG" id="sea:SeAg_B1995"/>
<dbReference type="HOGENOM" id="CLU_039379_1_0_6"/>
<dbReference type="UniPathway" id="UPA00085"/>
<dbReference type="Proteomes" id="UP000008819">
    <property type="component" value="Chromosome"/>
</dbReference>
<dbReference type="GO" id="GO:0005737">
    <property type="term" value="C:cytoplasm"/>
    <property type="evidence" value="ECO:0007669"/>
    <property type="project" value="UniProtKB-SubCell"/>
</dbReference>
<dbReference type="GO" id="GO:0043811">
    <property type="term" value="F:phosphate:acyl-[acyl carrier protein] acyltransferase activity"/>
    <property type="evidence" value="ECO:0007669"/>
    <property type="project" value="UniProtKB-UniRule"/>
</dbReference>
<dbReference type="GO" id="GO:0006633">
    <property type="term" value="P:fatty acid biosynthetic process"/>
    <property type="evidence" value="ECO:0007669"/>
    <property type="project" value="UniProtKB-UniRule"/>
</dbReference>
<dbReference type="GO" id="GO:0008654">
    <property type="term" value="P:phospholipid biosynthetic process"/>
    <property type="evidence" value="ECO:0007669"/>
    <property type="project" value="UniProtKB-KW"/>
</dbReference>
<dbReference type="FunFam" id="3.40.718.10:FF:000008">
    <property type="entry name" value="Phosphate acyltransferase"/>
    <property type="match status" value="1"/>
</dbReference>
<dbReference type="Gene3D" id="3.40.718.10">
    <property type="entry name" value="Isopropylmalate Dehydrogenase"/>
    <property type="match status" value="1"/>
</dbReference>
<dbReference type="HAMAP" id="MF_00019">
    <property type="entry name" value="PlsX"/>
    <property type="match status" value="1"/>
</dbReference>
<dbReference type="InterPro" id="IPR003664">
    <property type="entry name" value="FA_synthesis"/>
</dbReference>
<dbReference type="InterPro" id="IPR012281">
    <property type="entry name" value="Phospholipid_synth_PlsX-like"/>
</dbReference>
<dbReference type="NCBIfam" id="TIGR00182">
    <property type="entry name" value="plsX"/>
    <property type="match status" value="1"/>
</dbReference>
<dbReference type="PANTHER" id="PTHR30100">
    <property type="entry name" value="FATTY ACID/PHOSPHOLIPID SYNTHESIS PROTEIN PLSX"/>
    <property type="match status" value="1"/>
</dbReference>
<dbReference type="PANTHER" id="PTHR30100:SF1">
    <property type="entry name" value="PHOSPHATE ACYLTRANSFERASE"/>
    <property type="match status" value="1"/>
</dbReference>
<dbReference type="Pfam" id="PF02504">
    <property type="entry name" value="FA_synthesis"/>
    <property type="match status" value="1"/>
</dbReference>
<dbReference type="PIRSF" id="PIRSF002465">
    <property type="entry name" value="Phsphlp_syn_PlsX"/>
    <property type="match status" value="1"/>
</dbReference>
<dbReference type="SUPFAM" id="SSF53659">
    <property type="entry name" value="Isocitrate/Isopropylmalate dehydrogenase-like"/>
    <property type="match status" value="1"/>
</dbReference>
<protein>
    <recommendedName>
        <fullName evidence="1">Phosphate acyltransferase</fullName>
        <ecNumber evidence="1">2.3.1.274</ecNumber>
    </recommendedName>
    <alternativeName>
        <fullName evidence="1">Acyl-ACP phosphotransacylase</fullName>
    </alternativeName>
    <alternativeName>
        <fullName evidence="1">Acyl-[acyl-carrier-protein]--phosphate acyltransferase</fullName>
    </alternativeName>
    <alternativeName>
        <fullName evidence="1">Phosphate-acyl-ACP acyltransferase</fullName>
    </alternativeName>
</protein>
<reference key="1">
    <citation type="journal article" date="2011" name="J. Bacteriol.">
        <title>Comparative genomics of 28 Salmonella enterica isolates: evidence for CRISPR-mediated adaptive sublineage evolution.</title>
        <authorList>
            <person name="Fricke W.F."/>
            <person name="Mammel M.K."/>
            <person name="McDermott P.F."/>
            <person name="Tartera C."/>
            <person name="White D.G."/>
            <person name="Leclerc J.E."/>
            <person name="Ravel J."/>
            <person name="Cebula T.A."/>
        </authorList>
    </citation>
    <scope>NUCLEOTIDE SEQUENCE [LARGE SCALE GENOMIC DNA]</scope>
    <source>
        <strain>SL483</strain>
    </source>
</reference>
<organism>
    <name type="scientific">Salmonella agona (strain SL483)</name>
    <dbReference type="NCBI Taxonomy" id="454166"/>
    <lineage>
        <taxon>Bacteria</taxon>
        <taxon>Pseudomonadati</taxon>
        <taxon>Pseudomonadota</taxon>
        <taxon>Gammaproteobacteria</taxon>
        <taxon>Enterobacterales</taxon>
        <taxon>Enterobacteriaceae</taxon>
        <taxon>Salmonella</taxon>
    </lineage>
</organism>
<accession>B5F915</accession>
<name>PLSX_SALA4</name>
<feature type="chain" id="PRO_1000089933" description="Phosphate acyltransferase">
    <location>
        <begin position="1"/>
        <end position="359"/>
    </location>
</feature>
<gene>
    <name evidence="1" type="primary">plsX</name>
    <name type="ordered locus">SeAg_B1995</name>
</gene>
<proteinExistence type="inferred from homology"/>
<comment type="function">
    <text evidence="1">Catalyzes the reversible formation of acyl-phosphate (acyl-PO(4)) from acyl-[acyl-carrier-protein] (acyl-ACP). This enzyme utilizes acyl-ACP as fatty acyl donor, but not acyl-CoA.</text>
</comment>
<comment type="catalytic activity">
    <reaction evidence="1">
        <text>a fatty acyl-[ACP] + phosphate = an acyl phosphate + holo-[ACP]</text>
        <dbReference type="Rhea" id="RHEA:42292"/>
        <dbReference type="Rhea" id="RHEA-COMP:9685"/>
        <dbReference type="Rhea" id="RHEA-COMP:14125"/>
        <dbReference type="ChEBI" id="CHEBI:43474"/>
        <dbReference type="ChEBI" id="CHEBI:59918"/>
        <dbReference type="ChEBI" id="CHEBI:64479"/>
        <dbReference type="ChEBI" id="CHEBI:138651"/>
        <dbReference type="EC" id="2.3.1.274"/>
    </reaction>
</comment>
<comment type="pathway">
    <text evidence="1">Lipid metabolism; phospholipid metabolism.</text>
</comment>
<comment type="subunit">
    <text evidence="1">Homodimer. Probably interacts with PlsY.</text>
</comment>
<comment type="subcellular location">
    <subcellularLocation>
        <location evidence="1">Cytoplasm</location>
    </subcellularLocation>
    <text evidence="1">Associated with the membrane possibly through PlsY.</text>
</comment>
<comment type="similarity">
    <text evidence="1">Belongs to the PlsX family.</text>
</comment>
<keyword id="KW-0963">Cytoplasm</keyword>
<keyword id="KW-0444">Lipid biosynthesis</keyword>
<keyword id="KW-0443">Lipid metabolism</keyword>
<keyword id="KW-0594">Phospholipid biosynthesis</keyword>
<keyword id="KW-1208">Phospholipid metabolism</keyword>
<keyword id="KW-0808">Transferase</keyword>
<evidence type="ECO:0000255" key="1">
    <source>
        <dbReference type="HAMAP-Rule" id="MF_00019"/>
    </source>
</evidence>